<name>MTNB_SODGM</name>
<keyword id="KW-0028">Amino-acid biosynthesis</keyword>
<keyword id="KW-0456">Lyase</keyword>
<keyword id="KW-0479">Metal-binding</keyword>
<keyword id="KW-0486">Methionine biosynthesis</keyword>
<keyword id="KW-0862">Zinc</keyword>
<sequence>MQLAELVAACRWIGAKGWSPATGGNMSQRRDVHSCYITESGLDKGHLDAGDFLTVDIQTGAAQPGRRPSAETGLHTFLYRRFPEVGCVLHTHSVSATVLSRAEQGSTLRLSGYEMQKSLTGQTDHREEVAIAVFDNSQDIPALVQRIALQDALTPLRYGFLMCGHGLTCWGRDVREARLHLEGLEFLFECEWRRRLLEAQ</sequence>
<accession>Q2NWC8</accession>
<organism>
    <name type="scientific">Sodalis glossinidius (strain morsitans)</name>
    <dbReference type="NCBI Taxonomy" id="343509"/>
    <lineage>
        <taxon>Bacteria</taxon>
        <taxon>Pseudomonadati</taxon>
        <taxon>Pseudomonadota</taxon>
        <taxon>Gammaproteobacteria</taxon>
        <taxon>Enterobacterales</taxon>
        <taxon>Bruguierivoracaceae</taxon>
        <taxon>Sodalis</taxon>
    </lineage>
</organism>
<gene>
    <name evidence="1" type="primary">mtnB</name>
    <name type="ordered locus">SG0272</name>
</gene>
<reference key="1">
    <citation type="journal article" date="2006" name="Genome Res.">
        <title>Massive genome erosion and functional adaptations provide insights into the symbiotic lifestyle of Sodalis glossinidius in the tsetse host.</title>
        <authorList>
            <person name="Toh H."/>
            <person name="Weiss B.L."/>
            <person name="Perkin S.A.H."/>
            <person name="Yamashita A."/>
            <person name="Oshima K."/>
            <person name="Hattori M."/>
            <person name="Aksoy S."/>
        </authorList>
    </citation>
    <scope>NUCLEOTIDE SEQUENCE [LARGE SCALE GENOMIC DNA]</scope>
    <source>
        <strain>morsitans</strain>
    </source>
</reference>
<protein>
    <recommendedName>
        <fullName evidence="1">Methylthioribulose-1-phosphate dehydratase</fullName>
        <shortName evidence="1">MTRu-1-P dehydratase</shortName>
        <ecNumber evidence="1">4.2.1.109</ecNumber>
    </recommendedName>
</protein>
<feature type="chain" id="PRO_0000357105" description="Methylthioribulose-1-phosphate dehydratase">
    <location>
        <begin position="1"/>
        <end position="200"/>
    </location>
</feature>
<feature type="binding site" evidence="1">
    <location>
        <position position="90"/>
    </location>
    <ligand>
        <name>Zn(2+)</name>
        <dbReference type="ChEBI" id="CHEBI:29105"/>
    </ligand>
</feature>
<feature type="binding site" evidence="1">
    <location>
        <position position="92"/>
    </location>
    <ligand>
        <name>Zn(2+)</name>
        <dbReference type="ChEBI" id="CHEBI:29105"/>
    </ligand>
</feature>
<dbReference type="EC" id="4.2.1.109" evidence="1"/>
<dbReference type="EMBL" id="AP008232">
    <property type="protein sequence ID" value="BAE73547.1"/>
    <property type="molecule type" value="Genomic_DNA"/>
</dbReference>
<dbReference type="RefSeq" id="WP_011410135.1">
    <property type="nucleotide sequence ID" value="NC_007712.1"/>
</dbReference>
<dbReference type="SMR" id="Q2NWC8"/>
<dbReference type="STRING" id="343509.SG0272"/>
<dbReference type="KEGG" id="sgl:SG0272"/>
<dbReference type="eggNOG" id="COG0235">
    <property type="taxonomic scope" value="Bacteria"/>
</dbReference>
<dbReference type="HOGENOM" id="CLU_006033_4_1_6"/>
<dbReference type="OrthoDB" id="9805559at2"/>
<dbReference type="UniPathway" id="UPA00904">
    <property type="reaction ID" value="UER00875"/>
</dbReference>
<dbReference type="Proteomes" id="UP000001932">
    <property type="component" value="Chromosome"/>
</dbReference>
<dbReference type="GO" id="GO:0005737">
    <property type="term" value="C:cytoplasm"/>
    <property type="evidence" value="ECO:0007669"/>
    <property type="project" value="InterPro"/>
</dbReference>
<dbReference type="GO" id="GO:0046570">
    <property type="term" value="F:methylthioribulose 1-phosphate dehydratase activity"/>
    <property type="evidence" value="ECO:0007669"/>
    <property type="project" value="UniProtKB-UniRule"/>
</dbReference>
<dbReference type="GO" id="GO:0008270">
    <property type="term" value="F:zinc ion binding"/>
    <property type="evidence" value="ECO:0007669"/>
    <property type="project" value="UniProtKB-UniRule"/>
</dbReference>
<dbReference type="GO" id="GO:0019509">
    <property type="term" value="P:L-methionine salvage from methylthioadenosine"/>
    <property type="evidence" value="ECO:0007669"/>
    <property type="project" value="UniProtKB-UniRule"/>
</dbReference>
<dbReference type="GO" id="GO:0005996">
    <property type="term" value="P:monosaccharide metabolic process"/>
    <property type="evidence" value="ECO:0007669"/>
    <property type="project" value="UniProtKB-ARBA"/>
</dbReference>
<dbReference type="Gene3D" id="3.40.225.10">
    <property type="entry name" value="Class II aldolase/adducin N-terminal domain"/>
    <property type="match status" value="1"/>
</dbReference>
<dbReference type="HAMAP" id="MF_01677">
    <property type="entry name" value="Salvage_MtnB"/>
    <property type="match status" value="1"/>
</dbReference>
<dbReference type="InterPro" id="IPR001303">
    <property type="entry name" value="Aldolase_II/adducin_N"/>
</dbReference>
<dbReference type="InterPro" id="IPR036409">
    <property type="entry name" value="Aldolase_II/adducin_N_sf"/>
</dbReference>
<dbReference type="InterPro" id="IPR017714">
    <property type="entry name" value="MethylthioRu-1-P_deHdtase_MtnB"/>
</dbReference>
<dbReference type="NCBIfam" id="NF006672">
    <property type="entry name" value="PRK09220.1"/>
    <property type="match status" value="1"/>
</dbReference>
<dbReference type="NCBIfam" id="TIGR03328">
    <property type="entry name" value="salvage_mtnB"/>
    <property type="match status" value="1"/>
</dbReference>
<dbReference type="PANTHER" id="PTHR10640">
    <property type="entry name" value="METHYLTHIORIBULOSE-1-PHOSPHATE DEHYDRATASE"/>
    <property type="match status" value="1"/>
</dbReference>
<dbReference type="PANTHER" id="PTHR10640:SF7">
    <property type="entry name" value="METHYLTHIORIBULOSE-1-PHOSPHATE DEHYDRATASE"/>
    <property type="match status" value="1"/>
</dbReference>
<dbReference type="Pfam" id="PF00596">
    <property type="entry name" value="Aldolase_II"/>
    <property type="match status" value="1"/>
</dbReference>
<dbReference type="SMART" id="SM01007">
    <property type="entry name" value="Aldolase_II"/>
    <property type="match status" value="1"/>
</dbReference>
<dbReference type="SUPFAM" id="SSF53639">
    <property type="entry name" value="AraD/HMP-PK domain-like"/>
    <property type="match status" value="1"/>
</dbReference>
<evidence type="ECO:0000255" key="1">
    <source>
        <dbReference type="HAMAP-Rule" id="MF_01677"/>
    </source>
</evidence>
<comment type="function">
    <text evidence="1">Catalyzes the dehydration of methylthioribulose-1-phosphate (MTRu-1-P) into 2,3-diketo-5-methylthiopentyl-1-phosphate (DK-MTP-1-P).</text>
</comment>
<comment type="catalytic activity">
    <reaction evidence="1">
        <text>5-(methylsulfanyl)-D-ribulose 1-phosphate = 5-methylsulfanyl-2,3-dioxopentyl phosphate + H2O</text>
        <dbReference type="Rhea" id="RHEA:15549"/>
        <dbReference type="ChEBI" id="CHEBI:15377"/>
        <dbReference type="ChEBI" id="CHEBI:58548"/>
        <dbReference type="ChEBI" id="CHEBI:58828"/>
        <dbReference type="EC" id="4.2.1.109"/>
    </reaction>
</comment>
<comment type="cofactor">
    <cofactor evidence="1">
        <name>Zn(2+)</name>
        <dbReference type="ChEBI" id="CHEBI:29105"/>
    </cofactor>
    <text evidence="1">Binds 1 zinc ion per subunit.</text>
</comment>
<comment type="pathway">
    <text evidence="1">Amino-acid biosynthesis; L-methionine biosynthesis via salvage pathway; L-methionine from S-methyl-5-thio-alpha-D-ribose 1-phosphate: step 2/6.</text>
</comment>
<comment type="similarity">
    <text evidence="1">Belongs to the aldolase class II family. MtnB subfamily.</text>
</comment>
<proteinExistence type="inferred from homology"/>